<sequence length="508" mass="56984">MPPLAVLLLALALLCAWRLSYSQGPTGTGTGRPRSLPALPLVGSLLQLAGHPQLHLRLWRLQGRYGSLYGLWMGSHYVVVVNSYQHAREVLLKKGKAFAGRPRTVTTDLLSRGGKDIAFASYGPLWKFQRKLVHAALSMFGEGSVALEKIICREAASLCETLGAAQDMALDMAPELTRAVTNVVCSLCFNSSYRRGDPEFEAMLEYSQGIVDTVAKESLVDIFPWLQIFPNRDLALLKRCLKVRDQLLQQKFTEHKEAFCGDTVRDLMDALLQVRLNAENNSPLEPGLELTDDHLLMTVGDIFGAGVETTTTVLKWAVLYLLHYPEVQKKIQEEMDQKIGLARHPHLSDRPLLPYLEATISEGLRIRPVSPLLIPHVSLADTSIGEYSIPKGARVVINLWSVHHDEKEWDKPEEFNPGRFLDEQGQHIHSPSPSYLPFGAGIRVCLGEVLAKMELFLFLAWVLQRFTLECPQDQPLPSLEGKFGVVLQVQKFRVKARLREAWRGEMVR</sequence>
<proteinExistence type="evidence at transcript level"/>
<gene>
    <name type="primary">CYP17A1</name>
    <name type="synonym">CYP17</name>
</gene>
<feature type="chain" id="PRO_0000051943" description="Steroid 17-alpha-hydroxylase/17,20 lyase">
    <location>
        <begin position="1"/>
        <end position="508"/>
    </location>
</feature>
<feature type="binding site" description="axial binding residue">
    <location>
        <position position="445"/>
    </location>
    <ligand>
        <name>heme</name>
        <dbReference type="ChEBI" id="CHEBI:30413"/>
    </ligand>
    <ligandPart>
        <name>Fe</name>
        <dbReference type="ChEBI" id="CHEBI:18248"/>
    </ligandPart>
</feature>
<protein>
    <recommendedName>
        <fullName>Steroid 17-alpha-hydroxylase/17,20 lyase</fullName>
        <ecNumber evidence="2">1.14.14.19</ecNumber>
        <ecNumber evidence="2">1.14.14.32</ecNumber>
    </recommendedName>
    <alternativeName>
        <fullName>17-alpha-hydroxyprogesterone aldolase</fullName>
    </alternativeName>
    <alternativeName>
        <fullName>CYPXVII</fullName>
    </alternativeName>
    <alternativeName>
        <fullName>Cytochrome P450 17A1</fullName>
    </alternativeName>
    <alternativeName>
        <fullName>Cytochrome P450-C17</fullName>
        <shortName>Cytochrome P450c17</shortName>
    </alternativeName>
</protein>
<name>CP17A_CHICK</name>
<keyword id="KW-0349">Heme</keyword>
<keyword id="KW-0408">Iron</keyword>
<keyword id="KW-0443">Lipid metabolism</keyword>
<keyword id="KW-0456">Lyase</keyword>
<keyword id="KW-0472">Membrane</keyword>
<keyword id="KW-0479">Metal-binding</keyword>
<keyword id="KW-0503">Monooxygenase</keyword>
<keyword id="KW-0560">Oxidoreductase</keyword>
<keyword id="KW-1185">Reference proteome</keyword>
<keyword id="KW-0755">Steroidogenesis</keyword>
<reference key="1">
    <citation type="journal article" date="1988" name="Gene">
        <title>cDNA cloning and sequence analysis of a chicken gene expressed during the gonadal development and homologous to mammalian cytochrome P-450c17.</title>
        <authorList>
            <person name="Ono H."/>
            <person name="Iwasaki M."/>
            <person name="Sakamoto N."/>
            <person name="Mizuno S."/>
        </authorList>
    </citation>
    <scope>NUCLEOTIDE SEQUENCE [MRNA]</scope>
</reference>
<comment type="function">
    <text>Conversion of pregnenolone and progesterone to their 17-alpha-hydroxylated products and subsequently to dehydroepiandrosterone (DHEA) and androstenedione. Catalyzes both the 17-alpha-hydroxylation and the 17,20-lyase reaction.</text>
</comment>
<comment type="catalytic activity">
    <reaction evidence="2">
        <text>a C21-steroid + reduced [NADPH--hemoprotein reductase] + O2 = a 17alpha-hydroxy-C21-steroid + oxidized [NADPH--hemoprotein reductase] + H2O + H(+)</text>
        <dbReference type="Rhea" id="RHEA:65760"/>
        <dbReference type="Rhea" id="RHEA-COMP:11964"/>
        <dbReference type="Rhea" id="RHEA-COMP:11965"/>
        <dbReference type="ChEBI" id="CHEBI:15377"/>
        <dbReference type="ChEBI" id="CHEBI:15378"/>
        <dbReference type="ChEBI" id="CHEBI:15379"/>
        <dbReference type="ChEBI" id="CHEBI:57618"/>
        <dbReference type="ChEBI" id="CHEBI:58210"/>
        <dbReference type="ChEBI" id="CHEBI:61313"/>
        <dbReference type="ChEBI" id="CHEBI:138141"/>
        <dbReference type="EC" id="1.14.14.19"/>
    </reaction>
</comment>
<comment type="catalytic activity">
    <reaction evidence="2">
        <text>17alpha-hydroxyprogesterone + reduced [NADPH--hemoprotein reductase] + O2 = androst-4-ene-3,17-dione + acetate + oxidized [NADPH--hemoprotein reductase] + H2O + 2 H(+)</text>
        <dbReference type="Rhea" id="RHEA:14753"/>
        <dbReference type="Rhea" id="RHEA-COMP:11964"/>
        <dbReference type="Rhea" id="RHEA-COMP:11965"/>
        <dbReference type="ChEBI" id="CHEBI:15377"/>
        <dbReference type="ChEBI" id="CHEBI:15378"/>
        <dbReference type="ChEBI" id="CHEBI:15379"/>
        <dbReference type="ChEBI" id="CHEBI:16422"/>
        <dbReference type="ChEBI" id="CHEBI:17252"/>
        <dbReference type="ChEBI" id="CHEBI:30089"/>
        <dbReference type="ChEBI" id="CHEBI:57618"/>
        <dbReference type="ChEBI" id="CHEBI:58210"/>
        <dbReference type="EC" id="1.14.14.32"/>
    </reaction>
</comment>
<comment type="catalytic activity">
    <reaction evidence="2">
        <text>17alpha-hydroxypregnenolone + reduced [NADPH--hemoprotein reductase] + O2 = 3beta-hydroxyandrost-5-en-17-one + acetate + oxidized [NADPH--hemoprotein reductase] + H2O + 2 H(+)</text>
        <dbReference type="Rhea" id="RHEA:50244"/>
        <dbReference type="Rhea" id="RHEA-COMP:11964"/>
        <dbReference type="Rhea" id="RHEA-COMP:11965"/>
        <dbReference type="ChEBI" id="CHEBI:15377"/>
        <dbReference type="ChEBI" id="CHEBI:15378"/>
        <dbReference type="ChEBI" id="CHEBI:15379"/>
        <dbReference type="ChEBI" id="CHEBI:28689"/>
        <dbReference type="ChEBI" id="CHEBI:28750"/>
        <dbReference type="ChEBI" id="CHEBI:30089"/>
        <dbReference type="ChEBI" id="CHEBI:57618"/>
        <dbReference type="ChEBI" id="CHEBI:58210"/>
        <dbReference type="EC" id="1.14.14.32"/>
    </reaction>
</comment>
<comment type="cofactor">
    <cofactor evidence="1">
        <name>heme</name>
        <dbReference type="ChEBI" id="CHEBI:30413"/>
    </cofactor>
</comment>
<comment type="pathway">
    <text>Lipid metabolism; steroid biosynthesis.</text>
</comment>
<comment type="subcellular location">
    <subcellularLocation>
        <location evidence="3">Membrane</location>
    </subcellularLocation>
</comment>
<comment type="similarity">
    <text evidence="3">Belongs to the cytochrome P450 family.</text>
</comment>
<evidence type="ECO:0000250" key="1"/>
<evidence type="ECO:0000250" key="2">
    <source>
        <dbReference type="UniProtKB" id="P05093"/>
    </source>
</evidence>
<evidence type="ECO:0000305" key="3"/>
<organism>
    <name type="scientific">Gallus gallus</name>
    <name type="common">Chicken</name>
    <dbReference type="NCBI Taxonomy" id="9031"/>
    <lineage>
        <taxon>Eukaryota</taxon>
        <taxon>Metazoa</taxon>
        <taxon>Chordata</taxon>
        <taxon>Craniata</taxon>
        <taxon>Vertebrata</taxon>
        <taxon>Euteleostomi</taxon>
        <taxon>Archelosauria</taxon>
        <taxon>Archosauria</taxon>
        <taxon>Dinosauria</taxon>
        <taxon>Saurischia</taxon>
        <taxon>Theropoda</taxon>
        <taxon>Coelurosauria</taxon>
        <taxon>Aves</taxon>
        <taxon>Neognathae</taxon>
        <taxon>Galloanserae</taxon>
        <taxon>Galliformes</taxon>
        <taxon>Phasianidae</taxon>
        <taxon>Phasianinae</taxon>
        <taxon>Gallus</taxon>
    </lineage>
</organism>
<dbReference type="EC" id="1.14.14.19" evidence="2"/>
<dbReference type="EC" id="1.14.14.32" evidence="2"/>
<dbReference type="EMBL" id="M21406">
    <property type="protein sequence ID" value="AAA48997.1"/>
    <property type="molecule type" value="mRNA"/>
</dbReference>
<dbReference type="PIR" id="JT0318">
    <property type="entry name" value="O4CHC7"/>
</dbReference>
<dbReference type="RefSeq" id="NP_001001901.1">
    <property type="nucleotide sequence ID" value="NM_001001901.2"/>
</dbReference>
<dbReference type="SMR" id="P12394"/>
<dbReference type="FunCoup" id="P12394">
    <property type="interactions" value="67"/>
</dbReference>
<dbReference type="STRING" id="9031.ENSGALP00000032532"/>
<dbReference type="PaxDb" id="9031-ENSGALP00000032532"/>
<dbReference type="GeneID" id="425056"/>
<dbReference type="KEGG" id="gga:425056"/>
<dbReference type="CTD" id="1586"/>
<dbReference type="VEuPathDB" id="HostDB:geneid_425056"/>
<dbReference type="eggNOG" id="KOG0156">
    <property type="taxonomic scope" value="Eukaryota"/>
</dbReference>
<dbReference type="InParanoid" id="P12394"/>
<dbReference type="OrthoDB" id="1470350at2759"/>
<dbReference type="PhylomeDB" id="P12394"/>
<dbReference type="UniPathway" id="UPA00062"/>
<dbReference type="PRO" id="PR:P12394"/>
<dbReference type="Proteomes" id="UP000000539">
    <property type="component" value="Unassembled WGS sequence"/>
</dbReference>
<dbReference type="GO" id="GO:0016020">
    <property type="term" value="C:membrane"/>
    <property type="evidence" value="ECO:0007669"/>
    <property type="project" value="UniProtKB-SubCell"/>
</dbReference>
<dbReference type="GO" id="GO:0020037">
    <property type="term" value="F:heme binding"/>
    <property type="evidence" value="ECO:0000250"/>
    <property type="project" value="UniProtKB"/>
</dbReference>
<dbReference type="GO" id="GO:0005506">
    <property type="term" value="F:iron ion binding"/>
    <property type="evidence" value="ECO:0007669"/>
    <property type="project" value="InterPro"/>
</dbReference>
<dbReference type="GO" id="GO:0016829">
    <property type="term" value="F:lyase activity"/>
    <property type="evidence" value="ECO:0007669"/>
    <property type="project" value="UniProtKB-KW"/>
</dbReference>
<dbReference type="GO" id="GO:0004508">
    <property type="term" value="F:steroid 17-alpha-monooxygenase activity"/>
    <property type="evidence" value="ECO:0000250"/>
    <property type="project" value="UniProtKB"/>
</dbReference>
<dbReference type="GO" id="GO:0042446">
    <property type="term" value="P:hormone biosynthetic process"/>
    <property type="evidence" value="ECO:0000250"/>
    <property type="project" value="UniProtKB"/>
</dbReference>
<dbReference type="GO" id="GO:0042448">
    <property type="term" value="P:progesterone metabolic process"/>
    <property type="evidence" value="ECO:0000318"/>
    <property type="project" value="GO_Central"/>
</dbReference>
<dbReference type="GO" id="GO:0006694">
    <property type="term" value="P:steroid biosynthetic process"/>
    <property type="evidence" value="ECO:0007669"/>
    <property type="project" value="UniProtKB-UniPathway"/>
</dbReference>
<dbReference type="GO" id="GO:0008202">
    <property type="term" value="P:steroid metabolic process"/>
    <property type="evidence" value="ECO:0000250"/>
    <property type="project" value="UniProtKB"/>
</dbReference>
<dbReference type="CDD" id="cd20673">
    <property type="entry name" value="CYP17A1"/>
    <property type="match status" value="1"/>
</dbReference>
<dbReference type="FunFam" id="1.10.630.10:FF:000002">
    <property type="entry name" value="Cytochrome P450 1A1"/>
    <property type="match status" value="1"/>
</dbReference>
<dbReference type="Gene3D" id="1.10.630.10">
    <property type="entry name" value="Cytochrome P450"/>
    <property type="match status" value="1"/>
</dbReference>
<dbReference type="InterPro" id="IPR001128">
    <property type="entry name" value="Cyt_P450"/>
</dbReference>
<dbReference type="InterPro" id="IPR017972">
    <property type="entry name" value="Cyt_P450_CS"/>
</dbReference>
<dbReference type="InterPro" id="IPR002401">
    <property type="entry name" value="Cyt_P450_E_grp-I"/>
</dbReference>
<dbReference type="InterPro" id="IPR036396">
    <property type="entry name" value="Cyt_P450_sf"/>
</dbReference>
<dbReference type="PANTHER" id="PTHR24289">
    <property type="entry name" value="STEROID 17-ALPHA-HYDROXYLASE/17,20 LYASE"/>
    <property type="match status" value="1"/>
</dbReference>
<dbReference type="PANTHER" id="PTHR24289:SF13">
    <property type="entry name" value="STEROID 17-ALPHA-HYDROXYLASE_17,20 LYASE"/>
    <property type="match status" value="1"/>
</dbReference>
<dbReference type="Pfam" id="PF00067">
    <property type="entry name" value="p450"/>
    <property type="match status" value="1"/>
</dbReference>
<dbReference type="PRINTS" id="PR00463">
    <property type="entry name" value="EP450I"/>
</dbReference>
<dbReference type="PRINTS" id="PR00385">
    <property type="entry name" value="P450"/>
</dbReference>
<dbReference type="SUPFAM" id="SSF48264">
    <property type="entry name" value="Cytochrome P450"/>
    <property type="match status" value="1"/>
</dbReference>
<dbReference type="PROSITE" id="PS00086">
    <property type="entry name" value="CYTOCHROME_P450"/>
    <property type="match status" value="1"/>
</dbReference>
<accession>P12394</accession>